<accession>B5BT18</accession>
<accession>Q9M378</accession>
<protein>
    <recommendedName>
        <fullName>TATA-binding protein-associated factor BTAF1</fullName>
        <shortName>AtBTAF1</shortName>
        <ecNumber>3.6.4.-</ecNumber>
    </recommendedName>
    <alternativeName>
        <fullName>Protein BTAF1 homolog</fullName>
    </alternativeName>
    <alternativeName>
        <fullName>Protein ROOT GROWTH DEFECTIVE 3</fullName>
    </alternativeName>
</protein>
<gene>
    <name type="primary">BTAF1</name>
    <name type="synonym">RGD3</name>
    <name type="ordered locus">At3g54280</name>
    <name type="ORF">F24B22.240</name>
</gene>
<sequence>MAQQQSSRLNRLLTLLDTGSTQATRLTAAKQIGDIAKSHPQDLSSLLRKVLHHLRSKKWDTRVAAAHAIGAIVLNVKHPSLSELLNSLATKLGEAGISDNVDEVVAFRNLQSKILANAPFRSFEMNKVLEFGALLASGGQEYDILNDNSKNPRDRVARQKKNLRRRLGLDMCEQFMDVNEMIRDEDLIEQKSNVPANGVGNRLYANCSPHHIQQFVSRMVPRVNSRRPSARELNLLKRKAKISSKDQAKGSCEVADVEMSSSHVASTSKRILSDSLDSSKADIGNEDDIEPDGDGKWPFHSFVEQLILDMFDPAWEIRHGSVMALREILMLHGGSAGVSTEEFSSDNGFELKDVLNKVTREREIDLNMQVSENELEPLRKRPKIEDPSKSFIDNTVLEVIGGDYDINVKDEDAEFLLPPVKVNGQTDCSSTKLEPQSSMDDSTSHSEINHVAEVNNHFEDKSFIEEPVIPKQQEENLEVLDLVKQARHSWIKNFEFLQDCTIRFLCVLSLDRFGDYISDQVVAPVREACAQALGATFKYMNPSLIYETLNILLQMQRRPEWEIRHGSLLGIKYLVAVRQEMLQDLLGYILPACKAGLEDSDDDVRAVAADALIPAAAAIVSLRGQTLLSIVMLLWDILLELDDLSPSTSSIMNLLAEIYSQDDMTLVMHEELSLGEEQNIELNEMGHIESIGERRDVKESPYALSGLAPRLWPFTRHDITSVRFSAIRTLERLLEAGCRKNISGQSKSSFWPSSILGDTLRIVFQNLLLESTEEILECSERVWRLLVQCPVDDLEDTAKFYMASWIELAATPYGSTLDATKMFWPVAPPRKSHFKAAAKMKAVKLENEASSILGFDYARSSASLEKQEDASARSTKIIVGSDMEMSVTRTRVVTASALGIFASRLREGSMQFVVDPLSSTLTSMSGVQRQVGSIVLISWFRETKCKAPSDGSGSLPGFPSPLKKWLLDLLACADPAFPTKDIFLPYAELSRTYTKMRNEASQLLHTVETCHCFDKLLSTNKLNVESVTADETIDFASTLDLWNKESAGNESLEKQVFEDVESSRQQLLSTAGYLKCVQSNLHITVTSLVAAAVVWMSEFPARLNPIILPLMASIKREQEQILQQIAAEALAELIAYCVDRKPSPNDKLIKNICSLTCMDPSETPQASIISSMDIVDDMDFLSSRSNTGKQKAKVVLASGEDRSKVEGFITRRGSELALKHLSLKFGGSLFDKLPKLWECLTEVLVPEIPSDQQKIDLKIESISDPQVLINNIQVVRSIAPVMEETLKPRLLSLLPCIFKCVRHSHVAVRLAASRCVMTMAKSMTTDVMAAVVESAIPMLGDLTCISGRQGAGMLIGLLVQGLGVELVPYSPLLVVPLLRCMSDVDSSVRQSVTRSFAALVPMLPLARGVPPPVGLSKDLSSNAEDAKFLEQLLDNSHIDDYKLCTELKVQLRRYQQEGINWLGFLKRFKLHGILCDDMGLGKTLQASAIVASDAAERRGSTDELDVFPSIIVCPSTLVGHWAFEIEKYIDLSLLSVLQYVGSAQDRVSLREQFNNHNVIITSYDVVRKDVDYLTQFSWNYCILDEGHIIKNAKSKITAAVKQLKAQHRLILSGTPIQNNIMELWSLFDFLMPGFLGTERQFQASYGKPLLAARDPKCSAKDAEAGVLAMEALHKQVMPFLLRRTKEEVLSDLPEKIIQDRYCDLSPVQLKLYEQFSGSSAKQEISSIIKVDGSADSGNADVAPTKASTHVFQALQYLLKLCSHPLLVLGDKVTEPVASDLAAMINGCSDIITELHKVQHSPKLVALQEILEECGIGSDASSSDGTLSVGQHRVLIFAQHKALLDIIEKDLFQAHMKSVTYMRLDGSVVPEKRFEIVKAFNSDPTIDVLLLTTHVGGLGLNLTSADTLVFMEHDWNPMRDHQAMDRAHRLGQKRVVNVHRLIMRGTLEEKVMSLQKFKVSVANTVINAENASMKTMNTDQLLDLFASAETSKKGGGSSKKGSEDNDQIAGTGKGMKAILGNLEELWDQSQYTEEYNLSQFLTKLNG</sequence>
<feature type="chain" id="PRO_0000423018" description="TATA-binding protein-associated factor BTAF1">
    <location>
        <begin position="1"/>
        <end position="2045"/>
    </location>
</feature>
<feature type="repeat" description="HEAT 1">
    <location>
        <begin position="3"/>
        <end position="40"/>
    </location>
</feature>
<feature type="repeat" description="HEAT 2">
    <location>
        <begin position="41"/>
        <end position="78"/>
    </location>
</feature>
<feature type="repeat" description="HEAT 3">
    <location>
        <begin position="584"/>
        <end position="621"/>
    </location>
</feature>
<feature type="repeat" description="HEAT 4">
    <location>
        <begin position="702"/>
        <end position="739"/>
    </location>
</feature>
<feature type="repeat" description="HEAT 5">
    <location>
        <begin position="1288"/>
        <end position="1325"/>
    </location>
</feature>
<feature type="repeat" description="HEAT 6">
    <location>
        <begin position="1367"/>
        <end position="1405"/>
    </location>
</feature>
<feature type="domain" description="Helicase ATP-binding" evidence="1">
    <location>
        <begin position="1463"/>
        <end position="1633"/>
    </location>
</feature>
<feature type="domain" description="Helicase C-terminal" evidence="2">
    <location>
        <begin position="1805"/>
        <end position="1976"/>
    </location>
</feature>
<feature type="region of interest" description="Disordered" evidence="3">
    <location>
        <begin position="1990"/>
        <end position="2011"/>
    </location>
</feature>
<feature type="short sequence motif" description="DEAH box">
    <location>
        <begin position="1584"/>
        <end position="1587"/>
    </location>
</feature>
<feature type="binding site" evidence="1">
    <location>
        <begin position="1476"/>
        <end position="1483"/>
    </location>
    <ligand>
        <name>ATP</name>
        <dbReference type="ChEBI" id="CHEBI:30616"/>
    </ligand>
</feature>
<feature type="mutagenesis site" description="In rgd3-1; impaired in adventitious root formation at the restrictive temperature of 28 degrees Celsius. Impaired in shoot regeneration." evidence="4">
    <original>G</original>
    <variation>E</variation>
    <location>
        <position position="932"/>
    </location>
</feature>
<keyword id="KW-0025">Alternative splicing</keyword>
<keyword id="KW-0067">ATP-binding</keyword>
<keyword id="KW-0238">DNA-binding</keyword>
<keyword id="KW-0347">Helicase</keyword>
<keyword id="KW-0378">Hydrolase</keyword>
<keyword id="KW-0547">Nucleotide-binding</keyword>
<keyword id="KW-0539">Nucleus</keyword>
<keyword id="KW-1185">Reference proteome</keyword>
<keyword id="KW-0677">Repeat</keyword>
<reference key="1">
    <citation type="journal article" date="2009" name="Plant J.">
        <title>Identification of novel meristem factors involved in shoot regeneration through the analysis of temperature-sensitive mutants of Arabidopsis.</title>
        <authorList>
            <person name="Tamaki H."/>
            <person name="Konishi M."/>
            <person name="Daimon Y."/>
            <person name="Aida M."/>
            <person name="Tasaka M."/>
            <person name="Sugiyama M."/>
        </authorList>
    </citation>
    <scope>NUCLEOTIDE SEQUENCE [MRNA]</scope>
    <scope>FUNCTION</scope>
    <scope>DISRUPTION PHENOTYPE</scope>
    <scope>MUTAGENESIS OF GLY-932</scope>
</reference>
<reference key="2">
    <citation type="journal article" date="2000" name="Nature">
        <title>Sequence and analysis of chromosome 3 of the plant Arabidopsis thaliana.</title>
        <authorList>
            <person name="Salanoubat M."/>
            <person name="Lemcke K."/>
            <person name="Rieger M."/>
            <person name="Ansorge W."/>
            <person name="Unseld M."/>
            <person name="Fartmann B."/>
            <person name="Valle G."/>
            <person name="Bloecker H."/>
            <person name="Perez-Alonso M."/>
            <person name="Obermaier B."/>
            <person name="Delseny M."/>
            <person name="Boutry M."/>
            <person name="Grivell L.A."/>
            <person name="Mache R."/>
            <person name="Puigdomenech P."/>
            <person name="De Simone V."/>
            <person name="Choisne N."/>
            <person name="Artiguenave F."/>
            <person name="Robert C."/>
            <person name="Brottier P."/>
            <person name="Wincker P."/>
            <person name="Cattolico L."/>
            <person name="Weissenbach J."/>
            <person name="Saurin W."/>
            <person name="Quetier F."/>
            <person name="Schaefer M."/>
            <person name="Mueller-Auer S."/>
            <person name="Gabel C."/>
            <person name="Fuchs M."/>
            <person name="Benes V."/>
            <person name="Wurmbach E."/>
            <person name="Drzonek H."/>
            <person name="Erfle H."/>
            <person name="Jordan N."/>
            <person name="Bangert S."/>
            <person name="Wiedelmann R."/>
            <person name="Kranz H."/>
            <person name="Voss H."/>
            <person name="Holland R."/>
            <person name="Brandt P."/>
            <person name="Nyakatura G."/>
            <person name="Vezzi A."/>
            <person name="D'Angelo M."/>
            <person name="Pallavicini A."/>
            <person name="Toppo S."/>
            <person name="Simionati B."/>
            <person name="Conrad A."/>
            <person name="Hornischer K."/>
            <person name="Kauer G."/>
            <person name="Loehnert T.-H."/>
            <person name="Nordsiek G."/>
            <person name="Reichelt J."/>
            <person name="Scharfe M."/>
            <person name="Schoen O."/>
            <person name="Bargues M."/>
            <person name="Terol J."/>
            <person name="Climent J."/>
            <person name="Navarro P."/>
            <person name="Collado C."/>
            <person name="Perez-Perez A."/>
            <person name="Ottenwaelder B."/>
            <person name="Duchemin D."/>
            <person name="Cooke R."/>
            <person name="Laudie M."/>
            <person name="Berger-Llauro C."/>
            <person name="Purnelle B."/>
            <person name="Masuy D."/>
            <person name="de Haan M."/>
            <person name="Maarse A.C."/>
            <person name="Alcaraz J.-P."/>
            <person name="Cottet A."/>
            <person name="Casacuberta E."/>
            <person name="Monfort A."/>
            <person name="Argiriou A."/>
            <person name="Flores M."/>
            <person name="Liguori R."/>
            <person name="Vitale D."/>
            <person name="Mannhaupt G."/>
            <person name="Haase D."/>
            <person name="Schoof H."/>
            <person name="Rudd S."/>
            <person name="Zaccaria P."/>
            <person name="Mewes H.-W."/>
            <person name="Mayer K.F.X."/>
            <person name="Kaul S."/>
            <person name="Town C.D."/>
            <person name="Koo H.L."/>
            <person name="Tallon L.J."/>
            <person name="Jenkins J."/>
            <person name="Rooney T."/>
            <person name="Rizzo M."/>
            <person name="Walts A."/>
            <person name="Utterback T."/>
            <person name="Fujii C.Y."/>
            <person name="Shea T.P."/>
            <person name="Creasy T.H."/>
            <person name="Haas B."/>
            <person name="Maiti R."/>
            <person name="Wu D."/>
            <person name="Peterson J."/>
            <person name="Van Aken S."/>
            <person name="Pai G."/>
            <person name="Militscher J."/>
            <person name="Sellers P."/>
            <person name="Gill J.E."/>
            <person name="Feldblyum T.V."/>
            <person name="Preuss D."/>
            <person name="Lin X."/>
            <person name="Nierman W.C."/>
            <person name="Salzberg S.L."/>
            <person name="White O."/>
            <person name="Venter J.C."/>
            <person name="Fraser C.M."/>
            <person name="Kaneko T."/>
            <person name="Nakamura Y."/>
            <person name="Sato S."/>
            <person name="Kato T."/>
            <person name="Asamizu E."/>
            <person name="Sasamoto S."/>
            <person name="Kimura T."/>
            <person name="Idesawa K."/>
            <person name="Kawashima K."/>
            <person name="Kishida Y."/>
            <person name="Kiyokawa C."/>
            <person name="Kohara M."/>
            <person name="Matsumoto M."/>
            <person name="Matsuno A."/>
            <person name="Muraki A."/>
            <person name="Nakayama S."/>
            <person name="Nakazaki N."/>
            <person name="Shinpo S."/>
            <person name="Takeuchi C."/>
            <person name="Wada T."/>
            <person name="Watanabe A."/>
            <person name="Yamada M."/>
            <person name="Yasuda M."/>
            <person name="Tabata S."/>
        </authorList>
    </citation>
    <scope>NUCLEOTIDE SEQUENCE [LARGE SCALE GENOMIC DNA]</scope>
    <source>
        <strain>cv. Columbia</strain>
    </source>
</reference>
<reference key="3">
    <citation type="journal article" date="2017" name="Plant J.">
        <title>Araport11: a complete reannotation of the Arabidopsis thaliana reference genome.</title>
        <authorList>
            <person name="Cheng C.Y."/>
            <person name="Krishnakumar V."/>
            <person name="Chan A.P."/>
            <person name="Thibaud-Nissen F."/>
            <person name="Schobel S."/>
            <person name="Town C.D."/>
        </authorList>
    </citation>
    <scope>GENOME REANNOTATION</scope>
    <source>
        <strain>cv. Columbia</strain>
    </source>
</reference>
<reference key="4">
    <citation type="journal article" date="2003" name="Development">
        <title>Genetic analysis of adventitious root formation with a novel series of temperature-sensitive mutants of Arabidopsis thaliana.</title>
        <authorList>
            <person name="Konishi M."/>
            <person name="Sugiyama M."/>
        </authorList>
    </citation>
    <scope>MUTANT RGD3-1</scope>
</reference>
<reference key="5">
    <citation type="journal article" date="2013" name="PLoS ONE">
        <title>Genome-wide comparative in silico analysis of the RNA helicase gene family in Zea mays and Glycine max: a comparison with Arabidopsis and Oryza sativa.</title>
        <authorList>
            <person name="Xu R."/>
            <person name="Zhang S."/>
            <person name="Huang J."/>
            <person name="Zheng C."/>
        </authorList>
    </citation>
    <scope>GENE FAMILY</scope>
</reference>
<organism>
    <name type="scientific">Arabidopsis thaliana</name>
    <name type="common">Mouse-ear cress</name>
    <dbReference type="NCBI Taxonomy" id="3702"/>
    <lineage>
        <taxon>Eukaryota</taxon>
        <taxon>Viridiplantae</taxon>
        <taxon>Streptophyta</taxon>
        <taxon>Embryophyta</taxon>
        <taxon>Tracheophyta</taxon>
        <taxon>Spermatophyta</taxon>
        <taxon>Magnoliopsida</taxon>
        <taxon>eudicotyledons</taxon>
        <taxon>Gunneridae</taxon>
        <taxon>Pentapetalae</taxon>
        <taxon>rosids</taxon>
        <taxon>malvids</taxon>
        <taxon>Brassicales</taxon>
        <taxon>Brassicaceae</taxon>
        <taxon>Camelineae</taxon>
        <taxon>Arabidopsis</taxon>
    </lineage>
</organism>
<comment type="function">
    <text evidence="4">Involved in meristem development. Acts as a positive regulator of the CUC-STM pathway in shoot apical meristem (SAM) neo-formation.</text>
</comment>
<comment type="subcellular location">
    <subcellularLocation>
        <location evidence="5">Nucleus</location>
    </subcellularLocation>
</comment>
<comment type="alternative products">
    <event type="alternative splicing"/>
    <isoform>
        <id>B5BT18-1</id>
        <name>1</name>
        <sequence type="displayed"/>
    </isoform>
    <text>A number of isoforms are produced. According to EST sequences.</text>
</comment>
<comment type="disruption phenotype">
    <text evidence="4">Impaired in root growth and true leaf development.</text>
</comment>
<comment type="similarity">
    <text evidence="5">Belongs to the helicase family.</text>
</comment>
<comment type="sequence caution" evidence="5">
    <conflict type="erroneous gene model prediction">
        <sequence resource="EMBL-CDS" id="CAB71002"/>
    </conflict>
</comment>
<name>BTAF1_ARATH</name>
<evidence type="ECO:0000255" key="1">
    <source>
        <dbReference type="PROSITE-ProRule" id="PRU00541"/>
    </source>
</evidence>
<evidence type="ECO:0000255" key="2">
    <source>
        <dbReference type="PROSITE-ProRule" id="PRU00542"/>
    </source>
</evidence>
<evidence type="ECO:0000256" key="3">
    <source>
        <dbReference type="SAM" id="MobiDB-lite"/>
    </source>
</evidence>
<evidence type="ECO:0000269" key="4">
    <source>
    </source>
</evidence>
<evidence type="ECO:0000305" key="5"/>
<proteinExistence type="evidence at protein level"/>
<dbReference type="EC" id="3.6.4.-"/>
<dbReference type="EMBL" id="AB440793">
    <property type="protein sequence ID" value="BAG70033.1"/>
    <property type="molecule type" value="mRNA"/>
</dbReference>
<dbReference type="EMBL" id="AL132957">
    <property type="protein sequence ID" value="CAB71002.1"/>
    <property type="status" value="ALT_SEQ"/>
    <property type="molecule type" value="Genomic_DNA"/>
</dbReference>
<dbReference type="EMBL" id="CP002686">
    <property type="protein sequence ID" value="AEE79207.1"/>
    <property type="molecule type" value="Genomic_DNA"/>
</dbReference>
<dbReference type="PIR" id="T47587">
    <property type="entry name" value="T47587"/>
</dbReference>
<dbReference type="RefSeq" id="NP_190996.3">
    <molecule id="B5BT18-1"/>
    <property type="nucleotide sequence ID" value="NM_115288.8"/>
</dbReference>
<dbReference type="SMR" id="B5BT18"/>
<dbReference type="FunCoup" id="B5BT18">
    <property type="interactions" value="4527"/>
</dbReference>
<dbReference type="STRING" id="3702.B5BT18"/>
<dbReference type="iPTMnet" id="B5BT18"/>
<dbReference type="PaxDb" id="3702-AT3G54280.2"/>
<dbReference type="ProteomicsDB" id="239102">
    <molecule id="B5BT18-1"/>
</dbReference>
<dbReference type="EnsemblPlants" id="AT3G54280.1">
    <molecule id="B5BT18-1"/>
    <property type="protein sequence ID" value="AT3G54280.1"/>
    <property type="gene ID" value="AT3G54280"/>
</dbReference>
<dbReference type="GeneID" id="824595"/>
<dbReference type="Gramene" id="AT3G54280.1">
    <molecule id="B5BT18-1"/>
    <property type="protein sequence ID" value="AT3G54280.1"/>
    <property type="gene ID" value="AT3G54280"/>
</dbReference>
<dbReference type="KEGG" id="ath:AT3G54280"/>
<dbReference type="Araport" id="AT3G54280"/>
<dbReference type="TAIR" id="AT3G54280">
    <property type="gene designation" value="RGD3"/>
</dbReference>
<dbReference type="eggNOG" id="KOG0392">
    <property type="taxonomic scope" value="Eukaryota"/>
</dbReference>
<dbReference type="HOGENOM" id="CLU_000315_1_1_1"/>
<dbReference type="InParanoid" id="B5BT18"/>
<dbReference type="OMA" id="WYSDIAC"/>
<dbReference type="PhylomeDB" id="B5BT18"/>
<dbReference type="PRO" id="PR:B5BT18"/>
<dbReference type="Proteomes" id="UP000006548">
    <property type="component" value="Chromosome 3"/>
</dbReference>
<dbReference type="ExpressionAtlas" id="B5BT18">
    <property type="expression patterns" value="baseline and differential"/>
</dbReference>
<dbReference type="GO" id="GO:0005634">
    <property type="term" value="C:nucleus"/>
    <property type="evidence" value="ECO:0007669"/>
    <property type="project" value="UniProtKB-SubCell"/>
</dbReference>
<dbReference type="GO" id="GO:0005524">
    <property type="term" value="F:ATP binding"/>
    <property type="evidence" value="ECO:0007669"/>
    <property type="project" value="UniProtKB-KW"/>
</dbReference>
<dbReference type="GO" id="GO:0016887">
    <property type="term" value="F:ATP hydrolysis activity"/>
    <property type="evidence" value="ECO:0007669"/>
    <property type="project" value="InterPro"/>
</dbReference>
<dbReference type="GO" id="GO:0003677">
    <property type="term" value="F:DNA binding"/>
    <property type="evidence" value="ECO:0007669"/>
    <property type="project" value="UniProtKB-KW"/>
</dbReference>
<dbReference type="GO" id="GO:0004386">
    <property type="term" value="F:helicase activity"/>
    <property type="evidence" value="ECO:0007669"/>
    <property type="project" value="UniProtKB-KW"/>
</dbReference>
<dbReference type="GO" id="GO:0017025">
    <property type="term" value="F:TBP-class protein binding"/>
    <property type="evidence" value="ECO:0007669"/>
    <property type="project" value="InterPro"/>
</dbReference>
<dbReference type="GO" id="GO:1902185">
    <property type="term" value="P:positive regulation of shoot apical meristem development"/>
    <property type="evidence" value="ECO:0000315"/>
    <property type="project" value="UniProtKB"/>
</dbReference>
<dbReference type="CDD" id="cd17999">
    <property type="entry name" value="DEXHc_Mot1"/>
    <property type="match status" value="1"/>
</dbReference>
<dbReference type="CDD" id="cd18793">
    <property type="entry name" value="SF2_C_SNF"/>
    <property type="match status" value="1"/>
</dbReference>
<dbReference type="FunFam" id="3.40.50.10810:FF:000009">
    <property type="entry name" value="B-TFIID TATA-box-binding protein-associated factor 1"/>
    <property type="match status" value="1"/>
</dbReference>
<dbReference type="FunFam" id="3.40.50.300:FF:000428">
    <property type="entry name" value="TATA-binding protein-associated factor 172"/>
    <property type="match status" value="1"/>
</dbReference>
<dbReference type="FunFam" id="1.25.10.10:FF:000502">
    <property type="entry name" value="TATA-binding protein-associated factor BTAF1"/>
    <property type="match status" value="1"/>
</dbReference>
<dbReference type="FunFam" id="1.25.10.10:FF:000642">
    <property type="entry name" value="TATA-binding protein-associated factor BTAF1"/>
    <property type="match status" value="1"/>
</dbReference>
<dbReference type="FunFam" id="1.25.10.10:FF:000787">
    <property type="entry name" value="TATA-binding protein-associated factor BTAF1"/>
    <property type="match status" value="1"/>
</dbReference>
<dbReference type="Gene3D" id="1.25.10.10">
    <property type="entry name" value="Leucine-rich Repeat Variant"/>
    <property type="match status" value="3"/>
</dbReference>
<dbReference type="Gene3D" id="3.40.50.300">
    <property type="entry name" value="P-loop containing nucleotide triphosphate hydrolases"/>
    <property type="match status" value="1"/>
</dbReference>
<dbReference type="Gene3D" id="3.40.50.10810">
    <property type="entry name" value="Tandem AAA-ATPase domain"/>
    <property type="match status" value="1"/>
</dbReference>
<dbReference type="InterPro" id="IPR011989">
    <property type="entry name" value="ARM-like"/>
</dbReference>
<dbReference type="InterPro" id="IPR016024">
    <property type="entry name" value="ARM-type_fold"/>
</dbReference>
<dbReference type="InterPro" id="IPR014001">
    <property type="entry name" value="Helicase_ATP-bd"/>
</dbReference>
<dbReference type="InterPro" id="IPR001650">
    <property type="entry name" value="Helicase_C-like"/>
</dbReference>
<dbReference type="InterPro" id="IPR044972">
    <property type="entry name" value="Mot1"/>
</dbReference>
<dbReference type="InterPro" id="IPR044078">
    <property type="entry name" value="Mot1_ATP-bd"/>
</dbReference>
<dbReference type="InterPro" id="IPR022707">
    <property type="entry name" value="Mot1_central_dom"/>
</dbReference>
<dbReference type="InterPro" id="IPR027417">
    <property type="entry name" value="P-loop_NTPase"/>
</dbReference>
<dbReference type="InterPro" id="IPR038718">
    <property type="entry name" value="SNF2-like_sf"/>
</dbReference>
<dbReference type="InterPro" id="IPR049730">
    <property type="entry name" value="SNF2/RAD54-like_C"/>
</dbReference>
<dbReference type="InterPro" id="IPR000330">
    <property type="entry name" value="SNF2_N"/>
</dbReference>
<dbReference type="PANTHER" id="PTHR36498">
    <property type="entry name" value="TATA-BINDING PROTEIN-ASSOCIATED FACTOR 172"/>
    <property type="match status" value="1"/>
</dbReference>
<dbReference type="PANTHER" id="PTHR36498:SF1">
    <property type="entry name" value="TATA-BINDING PROTEIN-ASSOCIATED FACTOR 172"/>
    <property type="match status" value="1"/>
</dbReference>
<dbReference type="Pfam" id="PF12054">
    <property type="entry name" value="DUF3535"/>
    <property type="match status" value="1"/>
</dbReference>
<dbReference type="Pfam" id="PF00271">
    <property type="entry name" value="Helicase_C"/>
    <property type="match status" value="1"/>
</dbReference>
<dbReference type="Pfam" id="PF00176">
    <property type="entry name" value="SNF2-rel_dom"/>
    <property type="match status" value="1"/>
</dbReference>
<dbReference type="SMART" id="SM00487">
    <property type="entry name" value="DEXDc"/>
    <property type="match status" value="1"/>
</dbReference>
<dbReference type="SMART" id="SM00490">
    <property type="entry name" value="HELICc"/>
    <property type="match status" value="1"/>
</dbReference>
<dbReference type="SUPFAM" id="SSF48371">
    <property type="entry name" value="ARM repeat"/>
    <property type="match status" value="1"/>
</dbReference>
<dbReference type="SUPFAM" id="SSF52540">
    <property type="entry name" value="P-loop containing nucleoside triphosphate hydrolases"/>
    <property type="match status" value="2"/>
</dbReference>
<dbReference type="PROSITE" id="PS51192">
    <property type="entry name" value="HELICASE_ATP_BIND_1"/>
    <property type="match status" value="1"/>
</dbReference>
<dbReference type="PROSITE" id="PS51194">
    <property type="entry name" value="HELICASE_CTER"/>
    <property type="match status" value="1"/>
</dbReference>